<geneLocation type="chloroplast"/>
<accession>Q9MTK3</accession>
<feature type="chain" id="PRO_0000207801" description="Photosystem I reaction center subunit IX">
    <location>
        <begin position="1"/>
        <end position="43"/>
    </location>
</feature>
<feature type="transmembrane region" description="Helical" evidence="1">
    <location>
        <begin position="7"/>
        <end position="27"/>
    </location>
</feature>
<evidence type="ECO:0000255" key="1">
    <source>
        <dbReference type="HAMAP-Rule" id="MF_00522"/>
    </source>
</evidence>
<organism>
    <name type="scientific">Oenothera elata subsp. hookeri</name>
    <name type="common">Hooker's evening primrose</name>
    <name type="synonym">Oenothera hookeri</name>
    <dbReference type="NCBI Taxonomy" id="85636"/>
    <lineage>
        <taxon>Eukaryota</taxon>
        <taxon>Viridiplantae</taxon>
        <taxon>Streptophyta</taxon>
        <taxon>Embryophyta</taxon>
        <taxon>Tracheophyta</taxon>
        <taxon>Spermatophyta</taxon>
        <taxon>Magnoliopsida</taxon>
        <taxon>eudicotyledons</taxon>
        <taxon>Gunneridae</taxon>
        <taxon>Pentapetalae</taxon>
        <taxon>rosids</taxon>
        <taxon>malvids</taxon>
        <taxon>Myrtales</taxon>
        <taxon>Onagraceae</taxon>
        <taxon>Onagroideae</taxon>
        <taxon>Onagreae</taxon>
        <taxon>Oenothera</taxon>
    </lineage>
</organism>
<dbReference type="EMBL" id="AJ271079">
    <property type="protein sequence ID" value="CAB67177.1"/>
    <property type="molecule type" value="Genomic_DNA"/>
</dbReference>
<dbReference type="RefSeq" id="NP_084712.1">
    <property type="nucleotide sequence ID" value="NC_002693.2"/>
</dbReference>
<dbReference type="SMR" id="Q9MTK3"/>
<dbReference type="GeneID" id="802719"/>
<dbReference type="GO" id="GO:0009535">
    <property type="term" value="C:chloroplast thylakoid membrane"/>
    <property type="evidence" value="ECO:0007669"/>
    <property type="project" value="UniProtKB-SubCell"/>
</dbReference>
<dbReference type="GO" id="GO:0009522">
    <property type="term" value="C:photosystem I"/>
    <property type="evidence" value="ECO:0007669"/>
    <property type="project" value="UniProtKB-KW"/>
</dbReference>
<dbReference type="GO" id="GO:0015979">
    <property type="term" value="P:photosynthesis"/>
    <property type="evidence" value="ECO:0007669"/>
    <property type="project" value="UniProtKB-UniRule"/>
</dbReference>
<dbReference type="FunFam" id="1.20.5.510:FF:000001">
    <property type="entry name" value="Photosystem I reaction center subunit IX"/>
    <property type="match status" value="1"/>
</dbReference>
<dbReference type="Gene3D" id="1.20.5.510">
    <property type="entry name" value="Single helix bin"/>
    <property type="match status" value="1"/>
</dbReference>
<dbReference type="HAMAP" id="MF_00522">
    <property type="entry name" value="PSI_PsaJ"/>
    <property type="match status" value="1"/>
</dbReference>
<dbReference type="InterPro" id="IPR002615">
    <property type="entry name" value="PSI_PsaJ"/>
</dbReference>
<dbReference type="InterPro" id="IPR036062">
    <property type="entry name" value="PSI_PsaJ_sf"/>
</dbReference>
<dbReference type="PANTHER" id="PTHR36082">
    <property type="match status" value="1"/>
</dbReference>
<dbReference type="PANTHER" id="PTHR36082:SF2">
    <property type="entry name" value="PHOTOSYSTEM I REACTION CENTER SUBUNIT IX"/>
    <property type="match status" value="1"/>
</dbReference>
<dbReference type="Pfam" id="PF01701">
    <property type="entry name" value="PSI_PsaJ"/>
    <property type="match status" value="1"/>
</dbReference>
<dbReference type="SUPFAM" id="SSF81544">
    <property type="entry name" value="Subunit IX of photosystem I reaction centre, PsaJ"/>
    <property type="match status" value="1"/>
</dbReference>
<comment type="function">
    <text evidence="1">May help in the organization of the PsaE and PsaF subunits.</text>
</comment>
<comment type="subcellular location">
    <subcellularLocation>
        <location evidence="1">Plastid</location>
        <location evidence="1">Chloroplast thylakoid membrane</location>
        <topology evidence="1">Single-pass membrane protein</topology>
    </subcellularLocation>
</comment>
<comment type="similarity">
    <text evidence="1">Belongs to the PsaJ family.</text>
</comment>
<protein>
    <recommendedName>
        <fullName evidence="1">Photosystem I reaction center subunit IX</fullName>
    </recommendedName>
    <alternativeName>
        <fullName evidence="1">PSI-J</fullName>
    </alternativeName>
</protein>
<gene>
    <name evidence="1" type="primary">psaJ</name>
</gene>
<reference key="1">
    <citation type="journal article" date="2000" name="Mol. Gen. Genet.">
        <title>Complete nucleotide sequence of the Oenothera elata plastid chromosome, representing plastome I of the five distinguishable Euoenothera plastomes.</title>
        <authorList>
            <person name="Hupfer H."/>
            <person name="Swiatek M."/>
            <person name="Hornung S."/>
            <person name="Herrmann R.G."/>
            <person name="Maier R.M."/>
            <person name="Chiu W.-L."/>
            <person name="Sears B."/>
        </authorList>
    </citation>
    <scope>NUCLEOTIDE SEQUENCE [LARGE SCALE GENOMIC DNA]</scope>
    <source>
        <strain>cv. Johansen</strain>
    </source>
</reference>
<sequence>MRDLKTYLSVAPVLSALWFGALAGLLIEINRFFPDALTFPFFS</sequence>
<proteinExistence type="inferred from homology"/>
<name>PSAJ_OENEH</name>
<keyword id="KW-0150">Chloroplast</keyword>
<keyword id="KW-0472">Membrane</keyword>
<keyword id="KW-0602">Photosynthesis</keyword>
<keyword id="KW-0603">Photosystem I</keyword>
<keyword id="KW-0934">Plastid</keyword>
<keyword id="KW-0793">Thylakoid</keyword>
<keyword id="KW-0812">Transmembrane</keyword>
<keyword id="KW-1133">Transmembrane helix</keyword>